<feature type="signal peptide" evidence="2">
    <location>
        <begin position="1"/>
        <end position="18"/>
    </location>
</feature>
<feature type="propeptide" id="PRO_0000034842">
    <location>
        <begin position="19"/>
        <end position="29"/>
    </location>
</feature>
<feature type="propeptide" id="PRO_0000034843">
    <location>
        <begin position="30"/>
        <end position="33"/>
    </location>
</feature>
<feature type="peptide" id="PRO_0000034844" description="Delta-actitoxin-Amc1a">
    <location>
        <begin position="34"/>
        <end position="60"/>
    </location>
</feature>
<feature type="propeptide" id="PRO_0000034845">
    <location>
        <begin position="61"/>
        <end position="63"/>
    </location>
</feature>
<feature type="propeptide" id="PRO_0000034846">
    <location>
        <begin position="64"/>
        <end position="67"/>
    </location>
</feature>
<feature type="peptide" id="PRO_0000034847" description="Delta-actitoxin-Amc1a">
    <location>
        <begin position="68"/>
        <end position="94"/>
    </location>
</feature>
<feature type="propeptide" id="PRO_0000034848">
    <location>
        <begin position="95"/>
        <end position="97"/>
    </location>
</feature>
<feature type="propeptide" id="PRO_0000034849">
    <location>
        <begin position="98"/>
        <end position="101"/>
    </location>
</feature>
<feature type="peptide" id="PRO_0000034850" description="Delta-actitoxin-Amc1a">
    <location>
        <begin position="102"/>
        <end position="128"/>
    </location>
</feature>
<feature type="propeptide" id="PRO_0000034851">
    <location>
        <begin position="129"/>
        <end position="131"/>
    </location>
</feature>
<feature type="propeptide" id="PRO_0000034852">
    <location>
        <begin position="132"/>
        <end position="135"/>
    </location>
</feature>
<feature type="peptide" id="PRO_0000034853" description="Delta-actitoxin-Amc1a">
    <location>
        <begin position="136"/>
        <end position="162"/>
    </location>
</feature>
<feature type="propeptide" id="PRO_0000034854">
    <location>
        <begin position="163"/>
        <end position="165"/>
    </location>
</feature>
<feature type="propeptide" id="PRO_0000034855">
    <location>
        <begin position="166"/>
        <end position="169"/>
    </location>
</feature>
<feature type="peptide" id="PRO_0000034856" description="Delta-actitoxin-Amc1a">
    <location>
        <begin position="170"/>
        <end position="196"/>
    </location>
</feature>
<feature type="propeptide" id="PRO_0000034857">
    <location>
        <begin position="197"/>
        <end position="199"/>
    </location>
</feature>
<feature type="propeptide" id="PRO_0000034858">
    <location>
        <begin position="200"/>
        <end position="203"/>
    </location>
</feature>
<feature type="peptide" id="PRO_0000034859" description="Delta-actitoxin-Amc1a">
    <location>
        <begin position="204"/>
        <end position="230"/>
    </location>
</feature>
<feature type="propeptide" id="PRO_0000034860">
    <location>
        <begin position="231"/>
        <end position="233"/>
    </location>
</feature>
<feature type="site" description="Cleavage">
    <location>
        <begin position="29"/>
        <end position="30"/>
    </location>
</feature>
<feature type="site" description="Cleavage">
    <location>
        <begin position="63"/>
        <end position="64"/>
    </location>
</feature>
<feature type="site" description="Cleavage">
    <location>
        <begin position="97"/>
        <end position="98"/>
    </location>
</feature>
<feature type="site" description="Cleavage">
    <location>
        <begin position="131"/>
        <end position="132"/>
    </location>
</feature>
<feature type="site" description="Cleavage">
    <location>
        <begin position="165"/>
        <end position="166"/>
    </location>
</feature>
<feature type="site" description="Cleavage">
    <location>
        <begin position="199"/>
        <end position="200"/>
    </location>
</feature>
<feature type="modified residue" description="Hydroxyproline" evidence="3">
    <location>
        <position position="39"/>
    </location>
</feature>
<feature type="modified residue" description="Hydroxyproline" evidence="3">
    <location>
        <position position="73"/>
    </location>
</feature>
<feature type="modified residue" description="Hydroxyproline" evidence="3">
    <location>
        <position position="107"/>
    </location>
</feature>
<feature type="modified residue" description="Hydroxyproline" evidence="3">
    <location>
        <position position="141"/>
    </location>
</feature>
<feature type="modified residue" description="Hydroxyproline" evidence="3">
    <location>
        <position position="175"/>
    </location>
</feature>
<feature type="modified residue" description="Hydroxyproline" evidence="3">
    <location>
        <position position="209"/>
    </location>
</feature>
<feature type="disulfide bond" evidence="1">
    <location>
        <begin position="40"/>
        <end position="51"/>
    </location>
</feature>
<feature type="disulfide bond" evidence="1">
    <location>
        <begin position="43"/>
        <end position="58"/>
    </location>
</feature>
<feature type="disulfide bond" evidence="1">
    <location>
        <begin position="74"/>
        <end position="85"/>
    </location>
</feature>
<feature type="disulfide bond" evidence="1">
    <location>
        <begin position="77"/>
        <end position="92"/>
    </location>
</feature>
<feature type="disulfide bond" evidence="1">
    <location>
        <begin position="108"/>
        <end position="119"/>
    </location>
</feature>
<feature type="disulfide bond" evidence="1">
    <location>
        <begin position="111"/>
        <end position="126"/>
    </location>
</feature>
<feature type="disulfide bond" evidence="1">
    <location>
        <begin position="142"/>
        <end position="153"/>
    </location>
</feature>
<feature type="disulfide bond" evidence="1">
    <location>
        <begin position="145"/>
        <end position="160"/>
    </location>
</feature>
<feature type="disulfide bond" evidence="1">
    <location>
        <begin position="176"/>
        <end position="187"/>
    </location>
</feature>
<feature type="disulfide bond" evidence="1">
    <location>
        <begin position="179"/>
        <end position="194"/>
    </location>
</feature>
<feature type="disulfide bond" evidence="1">
    <location>
        <begin position="210"/>
        <end position="221"/>
    </location>
</feature>
<feature type="disulfide bond" evidence="1">
    <location>
        <begin position="213"/>
        <end position="228"/>
    </location>
</feature>
<dbReference type="EMBL" id="AB180685">
    <property type="protein sequence ID" value="BAD74021.1"/>
    <property type="molecule type" value="mRNA"/>
</dbReference>
<dbReference type="TCDB" id="8.B.15.1.4">
    <property type="family name" value="the sea anemone peptide toxin class 4 (shtx) family"/>
</dbReference>
<dbReference type="GO" id="GO:0005576">
    <property type="term" value="C:extracellular region"/>
    <property type="evidence" value="ECO:0007669"/>
    <property type="project" value="UniProtKB-SubCell"/>
</dbReference>
<dbReference type="GO" id="GO:0042151">
    <property type="term" value="C:nematocyst"/>
    <property type="evidence" value="ECO:0007669"/>
    <property type="project" value="UniProtKB-SubCell"/>
</dbReference>
<dbReference type="GO" id="GO:0017080">
    <property type="term" value="F:sodium channel regulator activity"/>
    <property type="evidence" value="ECO:0007669"/>
    <property type="project" value="UniProtKB-KW"/>
</dbReference>
<dbReference type="GO" id="GO:0090729">
    <property type="term" value="F:toxin activity"/>
    <property type="evidence" value="ECO:0007669"/>
    <property type="project" value="UniProtKB-KW"/>
</dbReference>
<dbReference type="CDD" id="cd21873">
    <property type="entry name" value="Ugr_9a-1-like"/>
    <property type="match status" value="6"/>
</dbReference>
<sequence>MKRIFIVALLFATCLVNAKPSINDADIKREPEPNVAVPPCGDCYQQVGNTCVRVPSLCPSRKREPEPNVAVPPCGDCYQQVGNTCVRVPSLCPSRKREPEPNVAVPPCGDCYQQVGNTCVRVPSLCPSRKREPEPNVAVPPCGDCYQQVGNTCVRVPSLCPSRKREPEPNVAVPPCGDCYQQVGNTCVRVPSLCPSRKREPEPNVAVPPCGDCYQQVGNTCVRVPSLCPSRKR</sequence>
<protein>
    <recommendedName>
        <fullName evidence="5">Delta-actitoxin-Amc1a</fullName>
        <shortName evidence="5">Delta-AITX-Amc1a</shortName>
    </recommendedName>
    <alternativeName>
        <fullName evidence="6">AnmTX Ama 9a-1</fullName>
    </alternativeName>
    <alternativeName>
        <fullName evidence="4">Peptide toxins Am I</fullName>
    </alternativeName>
    <alternativeName>
        <fullName evidence="7">Peptide toxins Am-1</fullName>
    </alternativeName>
</protein>
<keyword id="KW-0165">Cleavage on pair of basic residues</keyword>
<keyword id="KW-1015">Disulfide bond</keyword>
<keyword id="KW-0379">Hydroxylation</keyword>
<keyword id="KW-0872">Ion channel impairing toxin</keyword>
<keyword id="KW-0166">Nematocyst</keyword>
<keyword id="KW-0677">Repeat</keyword>
<keyword id="KW-0964">Secreted</keyword>
<keyword id="KW-0732">Signal</keyword>
<keyword id="KW-0800">Toxin</keyword>
<keyword id="KW-0738">Voltage-gated sodium channel impairing toxin</keyword>
<accession>P69929</accession>
<accession>Q5R215</accession>
<name>BBH1A_ANTMC</name>
<organism>
    <name type="scientific">Antheopsis maculata</name>
    <name type="common">Sea anemone</name>
    <dbReference type="NCBI Taxonomy" id="280228"/>
    <lineage>
        <taxon>Eukaryota</taxon>
        <taxon>Metazoa</taxon>
        <taxon>Cnidaria</taxon>
        <taxon>Anthozoa</taxon>
        <taxon>Hexacorallia</taxon>
        <taxon>Actiniaria</taxon>
        <taxon>Actiniidae</taxon>
        <taxon>Antheopsis</taxon>
    </lineage>
</organism>
<comment type="function">
    <text evidence="8">May inhibit voltage-gated sodium channels (Nav).</text>
</comment>
<comment type="subcellular location">
    <subcellularLocation>
        <location evidence="7">Secreted</location>
    </subcellularLocation>
    <subcellularLocation>
        <location evidence="7">Nematocyst</location>
    </subcellularLocation>
</comment>
<comment type="PTM">
    <text evidence="7">Each Am I peptide may contain 2 disulfide bonds.</text>
</comment>
<comment type="PTM">
    <text evidence="3">The precursor protein seems to be processed in the following sequence: release of the signal peptide and of the propeptide, production of six identical 34-residue peptides by cleavage between Arg and Glu, release of four N-terminal and three C-terminal residues from each peptide and hydroxylation of each Pro in position 6 of the resulting 27-residue peptides.</text>
</comment>
<comment type="mass spectrometry">
    <text>The measured mass is that of any peptide toxin Am-1.</text>
</comment>
<comment type="toxic dose">
    <text evidence="3">LD(50) is 830 ug/kg into crabs.</text>
</comment>
<comment type="similarity">
    <text evidence="9">Belongs to the sea anemone BBH family.</text>
</comment>
<reference key="1">
    <citation type="journal article" date="2005" name="Toxicon">
        <title>Isolation and molecular cloning of novel peptide toxins from the sea anemone Antheopsis maculata.</title>
        <authorList>
            <person name="Honma T."/>
            <person name="Hasegawa Y."/>
            <person name="Ishida M."/>
            <person name="Nagai H."/>
            <person name="Nagashima Y."/>
            <person name="Shiomi K."/>
        </authorList>
    </citation>
    <scope>NUCLEOTIDE SEQUENCE [MRNA]</scope>
    <scope>MASS SPECTROMETRY</scope>
    <scope>HYDROXYLATION AT PRO-39; PRO-73; PRO-107; PRO-141; PRO-175 AND PRO-209</scope>
    <scope>TOXIC DOSE</scope>
</reference>
<reference key="2">
    <citation type="journal article" date="2012" name="Toxicon">
        <title>Development of a rational nomenclature for naming peptide and protein toxins from sea anemones.</title>
        <authorList>
            <person name="Oliveira J.S."/>
            <person name="Fuentes-Silva D."/>
            <person name="King G.F."/>
        </authorList>
    </citation>
    <scope>NOMENCLATURE</scope>
</reference>
<reference key="3">
    <citation type="journal article" date="2013" name="J. Biol. Chem.">
        <title>Sea anemone peptide with uncommon beta-hairpin structure inhibits acid-sensing ion channel 3 (ASIC3) and reveals analgesic activity.</title>
        <authorList>
            <person name="Osmakov D.I."/>
            <person name="Kozlov S.A."/>
            <person name="Andreev Y.A."/>
            <person name="Koshelev S.G."/>
            <person name="Sanamyan N.P."/>
            <person name="Sanamyan K.E."/>
            <person name="Dyachenko I.A."/>
            <person name="Bondarenko D.A."/>
            <person name="Murashev A.N."/>
            <person name="Mineev K.S."/>
            <person name="Arseniev A.S."/>
            <person name="Grishin E.V."/>
        </authorList>
    </citation>
    <scope>NOMENCLATURE</scope>
</reference>
<evidence type="ECO:0000250" key="1">
    <source>
        <dbReference type="UniProtKB" id="R4ZCU1"/>
    </source>
</evidence>
<evidence type="ECO:0000255" key="2"/>
<evidence type="ECO:0000269" key="3">
    <source>
    </source>
</evidence>
<evidence type="ECO:0000303" key="4">
    <source>
    </source>
</evidence>
<evidence type="ECO:0000303" key="5">
    <source>
    </source>
</evidence>
<evidence type="ECO:0000303" key="6">
    <source>
    </source>
</evidence>
<evidence type="ECO:0000305" key="7"/>
<evidence type="ECO:0000305" key="8">
    <source>
    </source>
</evidence>
<evidence type="ECO:0000305" key="9">
    <source>
    </source>
</evidence>
<proteinExistence type="evidence at protein level"/>